<evidence type="ECO:0000250" key="1"/>
<evidence type="ECO:0000250" key="2">
    <source>
        <dbReference type="UniProtKB" id="P05089"/>
    </source>
</evidence>
<evidence type="ECO:0000250" key="3">
    <source>
        <dbReference type="UniProtKB" id="P53608"/>
    </source>
</evidence>
<evidence type="ECO:0000255" key="4">
    <source>
        <dbReference type="PROSITE-ProRule" id="PRU00742"/>
    </source>
</evidence>
<evidence type="ECO:0000305" key="5"/>
<organism>
    <name type="scientific">Schizosaccharomyces pombe (strain 972 / ATCC 24843)</name>
    <name type="common">Fission yeast</name>
    <dbReference type="NCBI Taxonomy" id="284812"/>
    <lineage>
        <taxon>Eukaryota</taxon>
        <taxon>Fungi</taxon>
        <taxon>Dikarya</taxon>
        <taxon>Ascomycota</taxon>
        <taxon>Taphrinomycotina</taxon>
        <taxon>Schizosaccharomycetes</taxon>
        <taxon>Schizosaccharomycetales</taxon>
        <taxon>Schizosaccharomycetaceae</taxon>
        <taxon>Schizosaccharomyces</taxon>
    </lineage>
</organism>
<gene>
    <name type="primary">aru1</name>
    <name type="ORF">SPAC3H1.07</name>
</gene>
<keyword id="KW-0056">Arginine metabolism</keyword>
<keyword id="KW-0378">Hydrolase</keyword>
<keyword id="KW-0464">Manganese</keyword>
<keyword id="KW-0479">Metal-binding</keyword>
<keyword id="KW-1185">Reference proteome</keyword>
<keyword id="KW-0835">Urea cycle</keyword>
<sequence length="323" mass="35704">MSPHKISDNHRHLMLSRFMMGNGVSIINMPFSGGQPKDGAELAPEMVEKAGLVDDLEHLGYDVKLIQNPEFKSRPSKEGPNQALMKNPLYVSNVTRQVRDAVQRELEQQRVVVNIGGDHSLAIGTVEGVQAVYDDACVLWIDAHADINTPESSPSKNLHGCPLSFSLGYAEPLPEEFAWTKRVIEERRLAFIGLRDLDPMERAFLRERNIAAYTMHHVDKYGIGRVVEMAMEHINPGKRRPVHLSFDVDACDPIVAPATGTRVPGGLTFREAMYICEAVAESGTLVAVDVMEVNPLLGNEEEAKTTVDLARSIVRTSLGQTLL</sequence>
<name>ARGI2_SCHPO</name>
<protein>
    <recommendedName>
        <fullName>Arginase</fullName>
        <ecNumber evidence="2">3.5.3.1</ecNumber>
    </recommendedName>
</protein>
<dbReference type="EC" id="3.5.3.1" evidence="2"/>
<dbReference type="EMBL" id="U24279">
    <property type="protein sequence ID" value="AAA65456.1"/>
    <property type="molecule type" value="Genomic_DNA"/>
</dbReference>
<dbReference type="EMBL" id="CU329670">
    <property type="protein sequence ID" value="CAA92260.1"/>
    <property type="molecule type" value="Genomic_DNA"/>
</dbReference>
<dbReference type="PIR" id="T38739">
    <property type="entry name" value="T38739"/>
</dbReference>
<dbReference type="PIR" id="T52537">
    <property type="entry name" value="T52537"/>
</dbReference>
<dbReference type="RefSeq" id="NP_593549.1">
    <property type="nucleotide sequence ID" value="NM_001018982.2"/>
</dbReference>
<dbReference type="SMR" id="Q10066"/>
<dbReference type="BioGRID" id="279799">
    <property type="interactions" value="17"/>
</dbReference>
<dbReference type="FunCoup" id="Q10066">
    <property type="interactions" value="473"/>
</dbReference>
<dbReference type="STRING" id="284812.Q10066"/>
<dbReference type="iPTMnet" id="Q10066"/>
<dbReference type="PaxDb" id="4896-SPAC3H1.07.1"/>
<dbReference type="EnsemblFungi" id="SPAC3H1.07.1">
    <property type="protein sequence ID" value="SPAC3H1.07.1:pep"/>
    <property type="gene ID" value="SPAC3H1.07"/>
</dbReference>
<dbReference type="GeneID" id="2543377"/>
<dbReference type="KEGG" id="spo:2543377"/>
<dbReference type="PomBase" id="SPAC3H1.07">
    <property type="gene designation" value="aru1"/>
</dbReference>
<dbReference type="VEuPathDB" id="FungiDB:SPAC3H1.07"/>
<dbReference type="eggNOG" id="KOG2965">
    <property type="taxonomic scope" value="Eukaryota"/>
</dbReference>
<dbReference type="HOGENOM" id="CLU_039478_6_1_1"/>
<dbReference type="InParanoid" id="Q10066"/>
<dbReference type="OMA" id="YKEFRYA"/>
<dbReference type="PhylomeDB" id="Q10066"/>
<dbReference type="Reactome" id="R-SPO-6798695">
    <property type="pathway name" value="Neutrophil degranulation"/>
</dbReference>
<dbReference type="Reactome" id="R-SPO-70635">
    <property type="pathway name" value="Urea cycle"/>
</dbReference>
<dbReference type="Reactome" id="R-SPO-9837999">
    <property type="pathway name" value="Mitochondrial protein degradation"/>
</dbReference>
<dbReference type="UniPathway" id="UPA00158">
    <property type="reaction ID" value="UER00270"/>
</dbReference>
<dbReference type="PRO" id="PR:Q10066"/>
<dbReference type="Proteomes" id="UP000002485">
    <property type="component" value="Chromosome I"/>
</dbReference>
<dbReference type="GO" id="GO:0005737">
    <property type="term" value="C:cytoplasm"/>
    <property type="evidence" value="ECO:0000318"/>
    <property type="project" value="GO_Central"/>
</dbReference>
<dbReference type="GO" id="GO:0005829">
    <property type="term" value="C:cytosol"/>
    <property type="evidence" value="ECO:0007005"/>
    <property type="project" value="PomBase"/>
</dbReference>
<dbReference type="GO" id="GO:0005634">
    <property type="term" value="C:nucleus"/>
    <property type="evidence" value="ECO:0007005"/>
    <property type="project" value="PomBase"/>
</dbReference>
<dbReference type="GO" id="GO:0004053">
    <property type="term" value="F:arginase activity"/>
    <property type="evidence" value="ECO:0000315"/>
    <property type="project" value="PomBase"/>
</dbReference>
<dbReference type="GO" id="GO:0030145">
    <property type="term" value="F:manganese ion binding"/>
    <property type="evidence" value="ECO:0000318"/>
    <property type="project" value="GO_Central"/>
</dbReference>
<dbReference type="GO" id="GO:0019547">
    <property type="term" value="P:arginine catabolic process to ornithine"/>
    <property type="evidence" value="ECO:0000315"/>
    <property type="project" value="PomBase"/>
</dbReference>
<dbReference type="GO" id="GO:0010121">
    <property type="term" value="P:arginine catabolic process to proline via ornithine"/>
    <property type="evidence" value="ECO:0000315"/>
    <property type="project" value="PomBase"/>
</dbReference>
<dbReference type="GO" id="GO:0000050">
    <property type="term" value="P:urea cycle"/>
    <property type="evidence" value="ECO:0000305"/>
    <property type="project" value="PomBase"/>
</dbReference>
<dbReference type="CDD" id="cd09989">
    <property type="entry name" value="Arginase"/>
    <property type="match status" value="1"/>
</dbReference>
<dbReference type="FunFam" id="3.40.800.10:FF:000005">
    <property type="entry name" value="Arginase"/>
    <property type="match status" value="1"/>
</dbReference>
<dbReference type="Gene3D" id="3.40.800.10">
    <property type="entry name" value="Ureohydrolase domain"/>
    <property type="match status" value="1"/>
</dbReference>
<dbReference type="InterPro" id="IPR014033">
    <property type="entry name" value="Arginase"/>
</dbReference>
<dbReference type="InterPro" id="IPR006035">
    <property type="entry name" value="Ureohydrolase"/>
</dbReference>
<dbReference type="InterPro" id="IPR023696">
    <property type="entry name" value="Ureohydrolase_dom_sf"/>
</dbReference>
<dbReference type="InterPro" id="IPR020855">
    <property type="entry name" value="Ureohydrolase_Mn_BS"/>
</dbReference>
<dbReference type="NCBIfam" id="TIGR01229">
    <property type="entry name" value="rocF_arginase"/>
    <property type="match status" value="1"/>
</dbReference>
<dbReference type="PANTHER" id="PTHR43782">
    <property type="entry name" value="ARGINASE"/>
    <property type="match status" value="1"/>
</dbReference>
<dbReference type="PANTHER" id="PTHR43782:SF3">
    <property type="entry name" value="ARGINASE"/>
    <property type="match status" value="1"/>
</dbReference>
<dbReference type="Pfam" id="PF00491">
    <property type="entry name" value="Arginase"/>
    <property type="match status" value="1"/>
</dbReference>
<dbReference type="PRINTS" id="PR00116">
    <property type="entry name" value="ARGINASE"/>
</dbReference>
<dbReference type="SUPFAM" id="SSF52768">
    <property type="entry name" value="Arginase/deacetylase"/>
    <property type="match status" value="1"/>
</dbReference>
<dbReference type="PROSITE" id="PS01053">
    <property type="entry name" value="ARGINASE_1"/>
    <property type="match status" value="1"/>
</dbReference>
<dbReference type="PROSITE" id="PS51409">
    <property type="entry name" value="ARGINASE_2"/>
    <property type="match status" value="1"/>
</dbReference>
<comment type="catalytic activity">
    <reaction evidence="2">
        <text>L-arginine + H2O = urea + L-ornithine</text>
        <dbReference type="Rhea" id="RHEA:20569"/>
        <dbReference type="ChEBI" id="CHEBI:15377"/>
        <dbReference type="ChEBI" id="CHEBI:16199"/>
        <dbReference type="ChEBI" id="CHEBI:32682"/>
        <dbReference type="ChEBI" id="CHEBI:46911"/>
        <dbReference type="EC" id="3.5.3.1"/>
    </reaction>
</comment>
<comment type="cofactor">
    <cofactor evidence="4">
        <name>Mn(2+)</name>
        <dbReference type="ChEBI" id="CHEBI:29035"/>
    </cofactor>
    <text evidence="4">Binds 2 manganese ions per subunit.</text>
</comment>
<comment type="pathway">
    <text evidence="2">Nitrogen metabolism; urea cycle; L-ornithine and urea from L-arginine: step 1/1.</text>
</comment>
<comment type="subunit">
    <text evidence="1">Homotrimer.</text>
</comment>
<comment type="similarity">
    <text evidence="4">Belongs to the arginase family.</text>
</comment>
<accession>Q10066</accession>
<reference key="1">
    <citation type="submission" date="1995-04" db="EMBL/GenBank/DDBJ databases">
        <authorList>
            <person name="Ocampos M."/>
        </authorList>
    </citation>
    <scope>NUCLEOTIDE SEQUENCE [GENOMIC DNA]</scope>
    <source>
        <strain>972 / ATCC 24843</strain>
    </source>
</reference>
<reference key="2">
    <citation type="journal article" date="2002" name="Nature">
        <title>The genome sequence of Schizosaccharomyces pombe.</title>
        <authorList>
            <person name="Wood V."/>
            <person name="Gwilliam R."/>
            <person name="Rajandream M.A."/>
            <person name="Lyne M.H."/>
            <person name="Lyne R."/>
            <person name="Stewart A."/>
            <person name="Sgouros J.G."/>
            <person name="Peat N."/>
            <person name="Hayles J."/>
            <person name="Baker S.G."/>
            <person name="Basham D."/>
            <person name="Bowman S."/>
            <person name="Brooks K."/>
            <person name="Brown D."/>
            <person name="Brown S."/>
            <person name="Chillingworth T."/>
            <person name="Churcher C.M."/>
            <person name="Collins M."/>
            <person name="Connor R."/>
            <person name="Cronin A."/>
            <person name="Davis P."/>
            <person name="Feltwell T."/>
            <person name="Fraser A."/>
            <person name="Gentles S."/>
            <person name="Goble A."/>
            <person name="Hamlin N."/>
            <person name="Harris D.E."/>
            <person name="Hidalgo J."/>
            <person name="Hodgson G."/>
            <person name="Holroyd S."/>
            <person name="Hornsby T."/>
            <person name="Howarth S."/>
            <person name="Huckle E.J."/>
            <person name="Hunt S."/>
            <person name="Jagels K."/>
            <person name="James K.D."/>
            <person name="Jones L."/>
            <person name="Jones M."/>
            <person name="Leather S."/>
            <person name="McDonald S."/>
            <person name="McLean J."/>
            <person name="Mooney P."/>
            <person name="Moule S."/>
            <person name="Mungall K.L."/>
            <person name="Murphy L.D."/>
            <person name="Niblett D."/>
            <person name="Odell C."/>
            <person name="Oliver K."/>
            <person name="O'Neil S."/>
            <person name="Pearson D."/>
            <person name="Quail M.A."/>
            <person name="Rabbinowitsch E."/>
            <person name="Rutherford K.M."/>
            <person name="Rutter S."/>
            <person name="Saunders D."/>
            <person name="Seeger K."/>
            <person name="Sharp S."/>
            <person name="Skelton J."/>
            <person name="Simmonds M.N."/>
            <person name="Squares R."/>
            <person name="Squares S."/>
            <person name="Stevens K."/>
            <person name="Taylor K."/>
            <person name="Taylor R.G."/>
            <person name="Tivey A."/>
            <person name="Walsh S.V."/>
            <person name="Warren T."/>
            <person name="Whitehead S."/>
            <person name="Woodward J.R."/>
            <person name="Volckaert G."/>
            <person name="Aert R."/>
            <person name="Robben J."/>
            <person name="Grymonprez B."/>
            <person name="Weltjens I."/>
            <person name="Vanstreels E."/>
            <person name="Rieger M."/>
            <person name="Schaefer M."/>
            <person name="Mueller-Auer S."/>
            <person name="Gabel C."/>
            <person name="Fuchs M."/>
            <person name="Duesterhoeft A."/>
            <person name="Fritzc C."/>
            <person name="Holzer E."/>
            <person name="Moestl D."/>
            <person name="Hilbert H."/>
            <person name="Borzym K."/>
            <person name="Langer I."/>
            <person name="Beck A."/>
            <person name="Lehrach H."/>
            <person name="Reinhardt R."/>
            <person name="Pohl T.M."/>
            <person name="Eger P."/>
            <person name="Zimmermann W."/>
            <person name="Wedler H."/>
            <person name="Wambutt R."/>
            <person name="Purnelle B."/>
            <person name="Goffeau A."/>
            <person name="Cadieu E."/>
            <person name="Dreano S."/>
            <person name="Gloux S."/>
            <person name="Lelaure V."/>
            <person name="Mottier S."/>
            <person name="Galibert F."/>
            <person name="Aves S.J."/>
            <person name="Xiang Z."/>
            <person name="Hunt C."/>
            <person name="Moore K."/>
            <person name="Hurst S.M."/>
            <person name="Lucas M."/>
            <person name="Rochet M."/>
            <person name="Gaillardin C."/>
            <person name="Tallada V.A."/>
            <person name="Garzon A."/>
            <person name="Thode G."/>
            <person name="Daga R.R."/>
            <person name="Cruzado L."/>
            <person name="Jimenez J."/>
            <person name="Sanchez M."/>
            <person name="del Rey F."/>
            <person name="Benito J."/>
            <person name="Dominguez A."/>
            <person name="Revuelta J.L."/>
            <person name="Moreno S."/>
            <person name="Armstrong J."/>
            <person name="Forsburg S.L."/>
            <person name="Cerutti L."/>
            <person name="Lowe T."/>
            <person name="McCombie W.R."/>
            <person name="Paulsen I."/>
            <person name="Potashkin J."/>
            <person name="Shpakovski G.V."/>
            <person name="Ussery D."/>
            <person name="Barrell B.G."/>
            <person name="Nurse P."/>
        </authorList>
    </citation>
    <scope>NUCLEOTIDE SEQUENCE [LARGE SCALE GENOMIC DNA]</scope>
    <source>
        <strain>972 / ATCC 24843</strain>
    </source>
</reference>
<feature type="chain" id="PRO_0000173710" description="Arginase">
    <location>
        <begin position="1"/>
        <end position="323"/>
    </location>
</feature>
<feature type="binding site" evidence="4">
    <location>
        <position position="119"/>
    </location>
    <ligand>
        <name>Mn(2+)</name>
        <dbReference type="ChEBI" id="CHEBI:29035"/>
        <label>1</label>
    </ligand>
</feature>
<feature type="binding site" evidence="4">
    <location>
        <position position="142"/>
    </location>
    <ligand>
        <name>Mn(2+)</name>
        <dbReference type="ChEBI" id="CHEBI:29035"/>
        <label>1</label>
    </ligand>
</feature>
<feature type="binding site" evidence="4">
    <location>
        <position position="142"/>
    </location>
    <ligand>
        <name>Mn(2+)</name>
        <dbReference type="ChEBI" id="CHEBI:29035"/>
        <label>2</label>
    </ligand>
</feature>
<feature type="binding site" evidence="3">
    <location>
        <begin position="144"/>
        <end position="148"/>
    </location>
    <ligand>
        <name>substrate</name>
    </ligand>
</feature>
<feature type="binding site" evidence="4">
    <location>
        <position position="144"/>
    </location>
    <ligand>
        <name>Mn(2+)</name>
        <dbReference type="ChEBI" id="CHEBI:29035"/>
        <label>2</label>
    </ligand>
</feature>
<feature type="binding site" evidence="4">
    <location>
        <position position="146"/>
    </location>
    <ligand>
        <name>Mn(2+)</name>
        <dbReference type="ChEBI" id="CHEBI:29035"/>
        <label>1</label>
    </ligand>
</feature>
<feature type="binding site" evidence="3">
    <location>
        <begin position="155"/>
        <end position="157"/>
    </location>
    <ligand>
        <name>substrate</name>
    </ligand>
</feature>
<feature type="binding site" evidence="3">
    <location>
        <position position="198"/>
    </location>
    <ligand>
        <name>substrate</name>
    </ligand>
</feature>
<feature type="binding site" evidence="4">
    <location>
        <position position="247"/>
    </location>
    <ligand>
        <name>Mn(2+)</name>
        <dbReference type="ChEBI" id="CHEBI:29035"/>
        <label>1</label>
    </ligand>
</feature>
<feature type="binding site" evidence="4">
    <location>
        <position position="247"/>
    </location>
    <ligand>
        <name>Mn(2+)</name>
        <dbReference type="ChEBI" id="CHEBI:29035"/>
        <label>2</label>
    </ligand>
</feature>
<feature type="binding site" evidence="4">
    <location>
        <position position="249"/>
    </location>
    <ligand>
        <name>Mn(2+)</name>
        <dbReference type="ChEBI" id="CHEBI:29035"/>
        <label>2</label>
    </ligand>
</feature>
<feature type="binding site" evidence="3">
    <location>
        <position position="261"/>
    </location>
    <ligand>
        <name>substrate</name>
    </ligand>
</feature>
<feature type="binding site" evidence="3">
    <location>
        <position position="292"/>
    </location>
    <ligand>
        <name>substrate</name>
    </ligand>
</feature>
<feature type="sequence conflict" description="In Ref. 1; AAA65456." evidence="5" ref="1">
    <original>A</original>
    <variation>R</variation>
    <location>
        <position position="278"/>
    </location>
</feature>
<feature type="sequence conflict" description="In Ref. 1; AAA65456." evidence="5" ref="1">
    <location>
        <begin position="293"/>
        <end position="294"/>
    </location>
</feature>
<proteinExistence type="inferred from homology"/>